<protein>
    <recommendedName>
        <fullName evidence="1">Large ribosomal subunit protein bL20c</fullName>
    </recommendedName>
    <alternativeName>
        <fullName evidence="2">50S ribosomal protein L20, chloroplastic</fullName>
    </alternativeName>
</protein>
<gene>
    <name evidence="1" type="primary">rpl20</name>
</gene>
<organism>
    <name type="scientific">Acorus calamus</name>
    <name type="common">Sweet flag</name>
    <dbReference type="NCBI Taxonomy" id="4465"/>
    <lineage>
        <taxon>Eukaryota</taxon>
        <taxon>Viridiplantae</taxon>
        <taxon>Streptophyta</taxon>
        <taxon>Embryophyta</taxon>
        <taxon>Tracheophyta</taxon>
        <taxon>Spermatophyta</taxon>
        <taxon>Magnoliopsida</taxon>
        <taxon>Liliopsida</taxon>
        <taxon>Acoraceae</taxon>
        <taxon>Acorus</taxon>
    </lineage>
</organism>
<dbReference type="EMBL" id="AJ879453">
    <property type="protein sequence ID" value="CAI53816.1"/>
    <property type="molecule type" value="Genomic_DNA"/>
</dbReference>
<dbReference type="RefSeq" id="YP_319787.1">
    <property type="nucleotide sequence ID" value="NC_007407.1"/>
</dbReference>
<dbReference type="SMR" id="Q3V512"/>
<dbReference type="GeneID" id="3677442"/>
<dbReference type="GO" id="GO:0009507">
    <property type="term" value="C:chloroplast"/>
    <property type="evidence" value="ECO:0007669"/>
    <property type="project" value="UniProtKB-SubCell"/>
</dbReference>
<dbReference type="GO" id="GO:1990904">
    <property type="term" value="C:ribonucleoprotein complex"/>
    <property type="evidence" value="ECO:0007669"/>
    <property type="project" value="UniProtKB-KW"/>
</dbReference>
<dbReference type="GO" id="GO:0005840">
    <property type="term" value="C:ribosome"/>
    <property type="evidence" value="ECO:0007669"/>
    <property type="project" value="UniProtKB-KW"/>
</dbReference>
<dbReference type="GO" id="GO:0019843">
    <property type="term" value="F:rRNA binding"/>
    <property type="evidence" value="ECO:0007669"/>
    <property type="project" value="UniProtKB-UniRule"/>
</dbReference>
<dbReference type="GO" id="GO:0003735">
    <property type="term" value="F:structural constituent of ribosome"/>
    <property type="evidence" value="ECO:0007669"/>
    <property type="project" value="InterPro"/>
</dbReference>
<dbReference type="GO" id="GO:0000027">
    <property type="term" value="P:ribosomal large subunit assembly"/>
    <property type="evidence" value="ECO:0007669"/>
    <property type="project" value="UniProtKB-UniRule"/>
</dbReference>
<dbReference type="GO" id="GO:0006412">
    <property type="term" value="P:translation"/>
    <property type="evidence" value="ECO:0007669"/>
    <property type="project" value="InterPro"/>
</dbReference>
<dbReference type="CDD" id="cd07026">
    <property type="entry name" value="Ribosomal_L20"/>
    <property type="match status" value="1"/>
</dbReference>
<dbReference type="FunFam" id="1.10.1900.20:FF:000001">
    <property type="entry name" value="50S ribosomal protein L20"/>
    <property type="match status" value="1"/>
</dbReference>
<dbReference type="Gene3D" id="6.10.160.10">
    <property type="match status" value="1"/>
</dbReference>
<dbReference type="Gene3D" id="1.10.1900.20">
    <property type="entry name" value="Ribosomal protein L20"/>
    <property type="match status" value="1"/>
</dbReference>
<dbReference type="HAMAP" id="MF_00382">
    <property type="entry name" value="Ribosomal_bL20"/>
    <property type="match status" value="1"/>
</dbReference>
<dbReference type="InterPro" id="IPR005813">
    <property type="entry name" value="Ribosomal_bL20"/>
</dbReference>
<dbReference type="InterPro" id="IPR049946">
    <property type="entry name" value="RIBOSOMAL_L20_CS"/>
</dbReference>
<dbReference type="InterPro" id="IPR035566">
    <property type="entry name" value="Ribosomal_protein_bL20_C"/>
</dbReference>
<dbReference type="NCBIfam" id="TIGR01032">
    <property type="entry name" value="rplT_bact"/>
    <property type="match status" value="1"/>
</dbReference>
<dbReference type="PANTHER" id="PTHR10986">
    <property type="entry name" value="39S RIBOSOMAL PROTEIN L20"/>
    <property type="match status" value="1"/>
</dbReference>
<dbReference type="Pfam" id="PF00453">
    <property type="entry name" value="Ribosomal_L20"/>
    <property type="match status" value="1"/>
</dbReference>
<dbReference type="PRINTS" id="PR00062">
    <property type="entry name" value="RIBOSOMALL20"/>
</dbReference>
<dbReference type="SUPFAM" id="SSF74731">
    <property type="entry name" value="Ribosomal protein L20"/>
    <property type="match status" value="1"/>
</dbReference>
<dbReference type="PROSITE" id="PS00937">
    <property type="entry name" value="RIBOSOMAL_L20"/>
    <property type="match status" value="1"/>
</dbReference>
<evidence type="ECO:0000255" key="1">
    <source>
        <dbReference type="HAMAP-Rule" id="MF_00382"/>
    </source>
</evidence>
<evidence type="ECO:0000305" key="2"/>
<geneLocation type="chloroplast"/>
<comment type="function">
    <text evidence="1">Binds directly to 23S ribosomal RNA and is necessary for the in vitro assembly process of the 50S ribosomal subunit. It is not involved in the protein synthesizing functions of that subunit.</text>
</comment>
<comment type="subcellular location">
    <subcellularLocation>
        <location>Plastid</location>
        <location>Chloroplast</location>
    </subcellularLocation>
</comment>
<comment type="similarity">
    <text evidence="1">Belongs to the bacterial ribosomal protein bL20 family.</text>
</comment>
<accession>Q3V512</accession>
<proteinExistence type="inferred from homology"/>
<name>RK20_ACOCL</name>
<sequence length="117" mass="13989">MTRVRRGYIARRRRTKIRLFAATFRGAHSRLTRAATQQKMRALVSAHRDRGKQKRDFRRLWITRINAVTRENGVCYSYSRLMHNLYKRQLLLNRKILAQIAILNKNCLHIISNEIIK</sequence>
<keyword id="KW-0150">Chloroplast</keyword>
<keyword id="KW-0934">Plastid</keyword>
<keyword id="KW-0687">Ribonucleoprotein</keyword>
<keyword id="KW-0689">Ribosomal protein</keyword>
<keyword id="KW-0694">RNA-binding</keyword>
<keyword id="KW-0699">rRNA-binding</keyword>
<reference key="1">
    <citation type="journal article" date="2005" name="Mol. Biol. Evol.">
        <title>Analysis of Acorus calamus chloroplast genome and its phylogenetic implications.</title>
        <authorList>
            <person name="Goremykin V.V."/>
            <person name="Holland B."/>
            <person name="Hirsch-Ernst K.I."/>
            <person name="Hellwig F.H."/>
        </authorList>
    </citation>
    <scope>NUCLEOTIDE SEQUENCE [LARGE SCALE GENOMIC DNA]</scope>
</reference>
<feature type="chain" id="PRO_0000355482" description="Large ribosomal subunit protein bL20c">
    <location>
        <begin position="1"/>
        <end position="117"/>
    </location>
</feature>